<reference key="1">
    <citation type="journal article" date="2009" name="Genome Res.">
        <title>Comparative genomic analyses of the human fungal pathogens Coccidioides and their relatives.</title>
        <authorList>
            <person name="Sharpton T.J."/>
            <person name="Stajich J.E."/>
            <person name="Rounsley S.D."/>
            <person name="Gardner M.J."/>
            <person name="Wortman J.R."/>
            <person name="Jordar V.S."/>
            <person name="Maiti R."/>
            <person name="Kodira C.D."/>
            <person name="Neafsey D.E."/>
            <person name="Zeng Q."/>
            <person name="Hung C.-Y."/>
            <person name="McMahan C."/>
            <person name="Muszewska A."/>
            <person name="Grynberg M."/>
            <person name="Mandel M.A."/>
            <person name="Kellner E.M."/>
            <person name="Barker B.M."/>
            <person name="Galgiani J.N."/>
            <person name="Orbach M.J."/>
            <person name="Kirkland T.N."/>
            <person name="Cole G.T."/>
            <person name="Henn M.R."/>
            <person name="Birren B.W."/>
            <person name="Taylor J.W."/>
        </authorList>
    </citation>
    <scope>NUCLEOTIDE SEQUENCE [LARGE SCALE GENOMIC DNA]</scope>
    <source>
        <strain>NAm1 / WU24</strain>
    </source>
</reference>
<protein>
    <recommendedName>
        <fullName>Conserved oligomeric Golgi complex subunit 6</fullName>
        <shortName>COG complex subunit 6</shortName>
    </recommendedName>
    <alternativeName>
        <fullName>Component of oligomeric Golgi complex 6</fullName>
    </alternativeName>
</protein>
<name>COG6_AJECN</name>
<keyword id="KW-0333">Golgi apparatus</keyword>
<keyword id="KW-0472">Membrane</keyword>
<keyword id="KW-0653">Protein transport</keyword>
<keyword id="KW-1185">Reference proteome</keyword>
<keyword id="KW-0813">Transport</keyword>
<gene>
    <name type="primary">COG6</name>
    <name type="ORF">HCAG_05277</name>
</gene>
<feature type="chain" id="PRO_0000339310" description="Conserved oligomeric Golgi complex subunit 6">
    <location>
        <begin position="1"/>
        <end position="645"/>
    </location>
</feature>
<accession>A6R6L9</accession>
<organism>
    <name type="scientific">Ajellomyces capsulatus (strain NAm1 / WU24)</name>
    <name type="common">Darling's disease fungus</name>
    <name type="synonym">Histoplasma capsulatum</name>
    <dbReference type="NCBI Taxonomy" id="2059318"/>
    <lineage>
        <taxon>Eukaryota</taxon>
        <taxon>Fungi</taxon>
        <taxon>Dikarya</taxon>
        <taxon>Ascomycota</taxon>
        <taxon>Pezizomycotina</taxon>
        <taxon>Eurotiomycetes</taxon>
        <taxon>Eurotiomycetidae</taxon>
        <taxon>Onygenales</taxon>
        <taxon>Ajellomycetaceae</taxon>
        <taxon>Histoplasma</taxon>
    </lineage>
</organism>
<dbReference type="EMBL" id="CH476659">
    <property type="protein sequence ID" value="EDN08778.1"/>
    <property type="molecule type" value="Genomic_DNA"/>
</dbReference>
<dbReference type="SMR" id="A6R6L9"/>
<dbReference type="STRING" id="339724.A6R6L9"/>
<dbReference type="KEGG" id="aje:HCAG_05277"/>
<dbReference type="VEuPathDB" id="FungiDB:HCAG_05277"/>
<dbReference type="HOGENOM" id="CLU_011361_1_0_1"/>
<dbReference type="OMA" id="HSCLDFF"/>
<dbReference type="OrthoDB" id="9262at299071"/>
<dbReference type="Proteomes" id="UP000009297">
    <property type="component" value="Unassembled WGS sequence"/>
</dbReference>
<dbReference type="GO" id="GO:0000139">
    <property type="term" value="C:Golgi membrane"/>
    <property type="evidence" value="ECO:0007669"/>
    <property type="project" value="UniProtKB-SubCell"/>
</dbReference>
<dbReference type="GO" id="GO:0017119">
    <property type="term" value="C:Golgi transport complex"/>
    <property type="evidence" value="ECO:0007669"/>
    <property type="project" value="InterPro"/>
</dbReference>
<dbReference type="GO" id="GO:0006891">
    <property type="term" value="P:intra-Golgi vesicle-mediated transport"/>
    <property type="evidence" value="ECO:0007669"/>
    <property type="project" value="InterPro"/>
</dbReference>
<dbReference type="GO" id="GO:0015031">
    <property type="term" value="P:protein transport"/>
    <property type="evidence" value="ECO:0007669"/>
    <property type="project" value="UniProtKB-KW"/>
</dbReference>
<dbReference type="InterPro" id="IPR010490">
    <property type="entry name" value="COG6"/>
</dbReference>
<dbReference type="InterPro" id="IPR048369">
    <property type="entry name" value="COG6_C"/>
</dbReference>
<dbReference type="InterPro" id="IPR048368">
    <property type="entry name" value="COG6_N"/>
</dbReference>
<dbReference type="PANTHER" id="PTHR21506">
    <property type="entry name" value="COMPONENT OF OLIGOMERIC GOLGI COMPLEX 6"/>
    <property type="match status" value="1"/>
</dbReference>
<dbReference type="PANTHER" id="PTHR21506:SF0">
    <property type="entry name" value="CONSERVED OLIGOMERIC GOLGI COMPLEX SUBUNIT 6"/>
    <property type="match status" value="1"/>
</dbReference>
<dbReference type="Pfam" id="PF20653">
    <property type="entry name" value="COG6_C"/>
    <property type="match status" value="1"/>
</dbReference>
<dbReference type="Pfam" id="PF06419">
    <property type="entry name" value="COG6_N"/>
    <property type="match status" value="1"/>
</dbReference>
<dbReference type="SMART" id="SM01087">
    <property type="entry name" value="COG6"/>
    <property type="match status" value="1"/>
</dbReference>
<comment type="function">
    <text evidence="1">Acts as a component of the peripheral membrane COG complex that is involved in intra-Golgi protein trafficking. COG is located at the cis-Golgi, and regulates tethering of retrograde intra-Golgi vesicles and possibly a number of other membrane trafficking events (By similarity).</text>
</comment>
<comment type="subcellular location">
    <subcellularLocation>
        <location evidence="1">Golgi apparatus membrane</location>
        <topology evidence="1">Peripheral membrane protein</topology>
    </subcellularLocation>
</comment>
<comment type="similarity">
    <text evidence="2">Belongs to the COG6 family.</text>
</comment>
<evidence type="ECO:0000250" key="1"/>
<evidence type="ECO:0000305" key="2"/>
<proteinExistence type="inferred from homology"/>
<sequence length="645" mass="71419">MARSCKILAKLPRVGTAISNLTNVCEEMRRHIVLATQETAPLFEEAAILMSQQQEVETKEKILDAFNNHFILSEDELSSLTSSAKPVDDLFFDALARMKQIHKDCEVLLGSENQRLGLDIMEQSSKNLNGAFQKLYKWIQKEFKSLNLEDPQISLSIRRALRVLAERPSLFHNCLDSFADAREYTLSDSFHTALTDVPSGQERDMAARPIEFSAHDPLRYVGDMLAWVHSAAVSEREALEALFIGDEGEIAKGIQAGVNNEPWSRVDGEEIVFDGPKALNDLVTRDLNGVTRSLRQRVELVLQGNEDSIVIYKIIGLLAFYENTFSKLLGRESGLVTSVASLQEFAFKHFQILMQDQLAVVSAEPANLTPPADLSTPQFLHDALDNLTSLMKAYDSSFAHEHANDSSGENKFSPIIREALDPFLELAKTSSNDISDPTSRAVFHVNCLLSTRDAISPYPFVCVTHLPQLTNTLKTLRTTLLEIQHEFLLNASGLHILLTALKPFTPPATATLEPTRSSYPPDLATISSLPEFQPQTLSSISQQLDDFLPSALVDVTENLKAIHSPVLVKSVTEEAVEAFCTDFEFVEGMILGADEARGKLVVHGDGEDVGAEEAGEGEGEEPQADNWRLRSLFPRTTGEIRVLLS</sequence>